<reference key="1">
    <citation type="journal article" date="2009" name="J. Bacteriol.">
        <title>Genomic sequencing reveals regulatory mutations and recombinational events in the widely used MC4100 lineage of Escherichia coli K-12.</title>
        <authorList>
            <person name="Ferenci T."/>
            <person name="Zhou Z."/>
            <person name="Betteridge T."/>
            <person name="Ren Y."/>
            <person name="Liu Y."/>
            <person name="Feng L."/>
            <person name="Reeves P.R."/>
            <person name="Wang L."/>
        </authorList>
    </citation>
    <scope>NUCLEOTIDE SEQUENCE [LARGE SCALE GENOMIC DNA]</scope>
    <source>
        <strain>K12 / MC4100 / BW2952</strain>
    </source>
</reference>
<feature type="chain" id="PRO_1000212653" description="Glycine dehydrogenase (decarboxylating)">
    <location>
        <begin position="1"/>
        <end position="957"/>
    </location>
</feature>
<feature type="modified residue" description="N6-(pyridoxal phosphate)lysine" evidence="1">
    <location>
        <position position="708"/>
    </location>
</feature>
<keyword id="KW-0560">Oxidoreductase</keyword>
<keyword id="KW-0663">Pyridoxal phosphate</keyword>
<name>GCSP_ECOBW</name>
<evidence type="ECO:0000255" key="1">
    <source>
        <dbReference type="HAMAP-Rule" id="MF_00711"/>
    </source>
</evidence>
<gene>
    <name evidence="1" type="primary">gcvP</name>
    <name type="ordered locus">BWG_2628</name>
</gene>
<dbReference type="EC" id="1.4.4.2" evidence="1"/>
<dbReference type="EMBL" id="CP001396">
    <property type="protein sequence ID" value="ACR63369.1"/>
    <property type="molecule type" value="Genomic_DNA"/>
</dbReference>
<dbReference type="RefSeq" id="WP_000195062.1">
    <property type="nucleotide sequence ID" value="NC_012759.1"/>
</dbReference>
<dbReference type="SMR" id="C5A0H5"/>
<dbReference type="KEGG" id="ebw:BWG_2628"/>
<dbReference type="HOGENOM" id="CLU_004620_1_1_6"/>
<dbReference type="GO" id="GO:0005829">
    <property type="term" value="C:cytosol"/>
    <property type="evidence" value="ECO:0007669"/>
    <property type="project" value="TreeGrafter"/>
</dbReference>
<dbReference type="GO" id="GO:0005960">
    <property type="term" value="C:glycine cleavage complex"/>
    <property type="evidence" value="ECO:0007669"/>
    <property type="project" value="TreeGrafter"/>
</dbReference>
<dbReference type="GO" id="GO:0016594">
    <property type="term" value="F:glycine binding"/>
    <property type="evidence" value="ECO:0007669"/>
    <property type="project" value="TreeGrafter"/>
</dbReference>
<dbReference type="GO" id="GO:0004375">
    <property type="term" value="F:glycine dehydrogenase (decarboxylating) activity"/>
    <property type="evidence" value="ECO:0007669"/>
    <property type="project" value="UniProtKB-EC"/>
</dbReference>
<dbReference type="GO" id="GO:0030170">
    <property type="term" value="F:pyridoxal phosphate binding"/>
    <property type="evidence" value="ECO:0007669"/>
    <property type="project" value="TreeGrafter"/>
</dbReference>
<dbReference type="GO" id="GO:0019464">
    <property type="term" value="P:glycine decarboxylation via glycine cleavage system"/>
    <property type="evidence" value="ECO:0007669"/>
    <property type="project" value="UniProtKB-UniRule"/>
</dbReference>
<dbReference type="CDD" id="cd00613">
    <property type="entry name" value="GDC-P"/>
    <property type="match status" value="2"/>
</dbReference>
<dbReference type="FunFam" id="3.40.640.10:FF:000005">
    <property type="entry name" value="Glycine dehydrogenase (decarboxylating), mitochondrial"/>
    <property type="match status" value="1"/>
</dbReference>
<dbReference type="FunFam" id="3.90.1150.10:FF:000007">
    <property type="entry name" value="Glycine dehydrogenase (decarboxylating), mitochondrial"/>
    <property type="match status" value="1"/>
</dbReference>
<dbReference type="FunFam" id="3.40.640.10:FF:000007">
    <property type="entry name" value="glycine dehydrogenase (Decarboxylating), mitochondrial"/>
    <property type="match status" value="1"/>
</dbReference>
<dbReference type="Gene3D" id="3.90.1150.10">
    <property type="entry name" value="Aspartate Aminotransferase, domain 1"/>
    <property type="match status" value="1"/>
</dbReference>
<dbReference type="Gene3D" id="3.40.640.10">
    <property type="entry name" value="Type I PLP-dependent aspartate aminotransferase-like (Major domain)"/>
    <property type="match status" value="2"/>
</dbReference>
<dbReference type="HAMAP" id="MF_00711">
    <property type="entry name" value="GcvP"/>
    <property type="match status" value="1"/>
</dbReference>
<dbReference type="InterPro" id="IPR003437">
    <property type="entry name" value="GcvP"/>
</dbReference>
<dbReference type="InterPro" id="IPR049316">
    <property type="entry name" value="GDC-P_C"/>
</dbReference>
<dbReference type="InterPro" id="IPR049315">
    <property type="entry name" value="GDC-P_N"/>
</dbReference>
<dbReference type="InterPro" id="IPR020581">
    <property type="entry name" value="GDC_P"/>
</dbReference>
<dbReference type="InterPro" id="IPR015424">
    <property type="entry name" value="PyrdxlP-dep_Trfase"/>
</dbReference>
<dbReference type="InterPro" id="IPR015421">
    <property type="entry name" value="PyrdxlP-dep_Trfase_major"/>
</dbReference>
<dbReference type="InterPro" id="IPR015422">
    <property type="entry name" value="PyrdxlP-dep_Trfase_small"/>
</dbReference>
<dbReference type="NCBIfam" id="TIGR00461">
    <property type="entry name" value="gcvP"/>
    <property type="match status" value="1"/>
</dbReference>
<dbReference type="NCBIfam" id="NF003346">
    <property type="entry name" value="PRK04366.1"/>
    <property type="match status" value="1"/>
</dbReference>
<dbReference type="PANTHER" id="PTHR11773:SF13">
    <property type="entry name" value="GLYCINE DEHYDROGENASE (DECARBOXYLATING)"/>
    <property type="match status" value="1"/>
</dbReference>
<dbReference type="PANTHER" id="PTHR11773">
    <property type="entry name" value="GLYCINE DEHYDROGENASE, DECARBOXYLATING"/>
    <property type="match status" value="1"/>
</dbReference>
<dbReference type="Pfam" id="PF21478">
    <property type="entry name" value="GcvP2_C"/>
    <property type="match status" value="1"/>
</dbReference>
<dbReference type="Pfam" id="PF02347">
    <property type="entry name" value="GDC-P"/>
    <property type="match status" value="2"/>
</dbReference>
<dbReference type="SUPFAM" id="SSF53383">
    <property type="entry name" value="PLP-dependent transferases"/>
    <property type="match status" value="2"/>
</dbReference>
<sequence>MTQTLSQLENSGAFIERHIGPDAAQQQEMLNAVGAQSLNALTGQIVPKDIQLATPPQVGAPATEYAALAELKAIASRNKRFTSYIGMGYTAVQLPPVILRNMLENPGWYTAYTPYQPEVSQGRLEALLNFQQVTLDLTGLDMASASLLDEATAAAEAMAMAKRVSKLKNANRFFVASDVHPQTLDVVRTRAETFGFEVIVDDAQKVLDHQDVFGVLLQQVGTTGEIHDYTALISELKSRKIVVSVAADIMALVLLTAPGKQGADIVFGSAQRFGVPMGYGGPHAAFFAAKDEYKRSMPGRIIGVSKDAAGNTALRMAMQTREQHIRREKANSNICTSQVLLANIASLYAVYHGPVGLKRIANRIHRLTDILAAGLQQKGLKLRHAHYFDTLCVEVADKAGVLTRAEAAEINLRSDILNAVGITLDETTTRENVMQLFNVLLGDNHGLDIDTLDKDVAHDSRSIQPAMLRDDEILTHPVFNRYHSETEMMRYMHSLERKDLALNQAMIPLGSCTMKLNAAAEMIPITWPEFAELHPFCPPEQAEGYQQMIAQLADWLVKLTGYDAVCMQPNSGAQGEYAGLLAIRHYHESRNEGHRDICLIPASAHGTNPASAHMAGMQVVVVACDKNGNIDLTDLRAKAEQAGDNLSCIMVTYPSTHGVYEETIREVCEVVHQFGGQVYLDGANMNAQVGITSPGFIGADVSHLNLHKTFCIPHGGGGPGMGPIGVKAHLAPFVPGHSVVQIEGMLTRQGAVSAAPFGSASILPISWMYIRMMGAEGLKKASQVAILNANYIASRLQDAFPVLYTGRDGRVAHECILDIRPLKEETGISELDIAKRLIDYGFHAPTMSFPVAGTLMVEPTESESKVELDRFIDAMLAIRAEIDQVKAGVWPLEDNPLVNAPHIQSELVAEWAHPYSREVAVFPAGVADKYWPTVKRLDDVYGDRNLFCSCVPISEYQ</sequence>
<accession>C5A0H5</accession>
<proteinExistence type="inferred from homology"/>
<comment type="function">
    <text evidence="1">The glycine cleavage system catalyzes the degradation of glycine. The P protein binds the alpha-amino group of glycine through its pyridoxal phosphate cofactor; CO(2) is released and the remaining methylamine moiety is then transferred to the lipoamide cofactor of the H protein.</text>
</comment>
<comment type="catalytic activity">
    <reaction evidence="1">
        <text>N(6)-[(R)-lipoyl]-L-lysyl-[glycine-cleavage complex H protein] + glycine + H(+) = N(6)-[(R)-S(8)-aminomethyldihydrolipoyl]-L-lysyl-[glycine-cleavage complex H protein] + CO2</text>
        <dbReference type="Rhea" id="RHEA:24304"/>
        <dbReference type="Rhea" id="RHEA-COMP:10494"/>
        <dbReference type="Rhea" id="RHEA-COMP:10495"/>
        <dbReference type="ChEBI" id="CHEBI:15378"/>
        <dbReference type="ChEBI" id="CHEBI:16526"/>
        <dbReference type="ChEBI" id="CHEBI:57305"/>
        <dbReference type="ChEBI" id="CHEBI:83099"/>
        <dbReference type="ChEBI" id="CHEBI:83143"/>
        <dbReference type="EC" id="1.4.4.2"/>
    </reaction>
</comment>
<comment type="cofactor">
    <cofactor evidence="1">
        <name>pyridoxal 5'-phosphate</name>
        <dbReference type="ChEBI" id="CHEBI:597326"/>
    </cofactor>
</comment>
<comment type="subunit">
    <text evidence="1">The glycine cleavage system is composed of four proteins: P, T, L and H.</text>
</comment>
<comment type="similarity">
    <text evidence="1">Belongs to the GcvP family.</text>
</comment>
<protein>
    <recommendedName>
        <fullName evidence="1">Glycine dehydrogenase (decarboxylating)</fullName>
        <ecNumber evidence="1">1.4.4.2</ecNumber>
    </recommendedName>
    <alternativeName>
        <fullName evidence="1">Glycine cleavage system P-protein</fullName>
    </alternativeName>
    <alternativeName>
        <fullName evidence="1">Glycine decarboxylase</fullName>
    </alternativeName>
    <alternativeName>
        <fullName evidence="1">Glycine dehydrogenase (aminomethyl-transferring)</fullName>
    </alternativeName>
</protein>
<organism>
    <name type="scientific">Escherichia coli (strain K12 / MC4100 / BW2952)</name>
    <dbReference type="NCBI Taxonomy" id="595496"/>
    <lineage>
        <taxon>Bacteria</taxon>
        <taxon>Pseudomonadati</taxon>
        <taxon>Pseudomonadota</taxon>
        <taxon>Gammaproteobacteria</taxon>
        <taxon>Enterobacterales</taxon>
        <taxon>Enterobacteriaceae</taxon>
        <taxon>Escherichia</taxon>
    </lineage>
</organism>